<feature type="chain" id="PRO_0000306379" description="Uncharacterized protein C1348.15">
    <location>
        <begin position="1"/>
        <end position="129"/>
    </location>
</feature>
<sequence length="129" mass="15130">MSIEFDDSSRHNMNMTQLMQLGAFDRRSGDDFMVQDFKNGIRDCSGIPVNNRNLAFKAYDAVKQKYDSSIKVFNIQDITIKGATWQHHNCQSTGKWYSQLYDYQNTFIGKQEYNILFDCYSYLKYNLNG</sequence>
<gene>
    <name type="ORF">SPBC1348.15</name>
</gene>
<protein>
    <recommendedName>
        <fullName>Uncharacterized protein C1348.15</fullName>
    </recommendedName>
</protein>
<proteinExistence type="inferred from homology"/>
<accession>P0CS84</accession>
<accession>Q6MX59</accession>
<organism>
    <name type="scientific">Schizosaccharomyces pombe (strain 972 / ATCC 24843)</name>
    <name type="common">Fission yeast</name>
    <dbReference type="NCBI Taxonomy" id="284812"/>
    <lineage>
        <taxon>Eukaryota</taxon>
        <taxon>Fungi</taxon>
        <taxon>Dikarya</taxon>
        <taxon>Ascomycota</taxon>
        <taxon>Taphrinomycotina</taxon>
        <taxon>Schizosaccharomycetes</taxon>
        <taxon>Schizosaccharomycetales</taxon>
        <taxon>Schizosaccharomycetaceae</taxon>
        <taxon>Schizosaccharomyces</taxon>
    </lineage>
</organism>
<reference key="1">
    <citation type="journal article" date="2002" name="Nature">
        <title>The genome sequence of Schizosaccharomyces pombe.</title>
        <authorList>
            <person name="Wood V."/>
            <person name="Gwilliam R."/>
            <person name="Rajandream M.A."/>
            <person name="Lyne M.H."/>
            <person name="Lyne R."/>
            <person name="Stewart A."/>
            <person name="Sgouros J.G."/>
            <person name="Peat N."/>
            <person name="Hayles J."/>
            <person name="Baker S.G."/>
            <person name="Basham D."/>
            <person name="Bowman S."/>
            <person name="Brooks K."/>
            <person name="Brown D."/>
            <person name="Brown S."/>
            <person name="Chillingworth T."/>
            <person name="Churcher C.M."/>
            <person name="Collins M."/>
            <person name="Connor R."/>
            <person name="Cronin A."/>
            <person name="Davis P."/>
            <person name="Feltwell T."/>
            <person name="Fraser A."/>
            <person name="Gentles S."/>
            <person name="Goble A."/>
            <person name="Hamlin N."/>
            <person name="Harris D.E."/>
            <person name="Hidalgo J."/>
            <person name="Hodgson G."/>
            <person name="Holroyd S."/>
            <person name="Hornsby T."/>
            <person name="Howarth S."/>
            <person name="Huckle E.J."/>
            <person name="Hunt S."/>
            <person name="Jagels K."/>
            <person name="James K.D."/>
            <person name="Jones L."/>
            <person name="Jones M."/>
            <person name="Leather S."/>
            <person name="McDonald S."/>
            <person name="McLean J."/>
            <person name="Mooney P."/>
            <person name="Moule S."/>
            <person name="Mungall K.L."/>
            <person name="Murphy L.D."/>
            <person name="Niblett D."/>
            <person name="Odell C."/>
            <person name="Oliver K."/>
            <person name="O'Neil S."/>
            <person name="Pearson D."/>
            <person name="Quail M.A."/>
            <person name="Rabbinowitsch E."/>
            <person name="Rutherford K.M."/>
            <person name="Rutter S."/>
            <person name="Saunders D."/>
            <person name="Seeger K."/>
            <person name="Sharp S."/>
            <person name="Skelton J."/>
            <person name="Simmonds M.N."/>
            <person name="Squares R."/>
            <person name="Squares S."/>
            <person name="Stevens K."/>
            <person name="Taylor K."/>
            <person name="Taylor R.G."/>
            <person name="Tivey A."/>
            <person name="Walsh S.V."/>
            <person name="Warren T."/>
            <person name="Whitehead S."/>
            <person name="Woodward J.R."/>
            <person name="Volckaert G."/>
            <person name="Aert R."/>
            <person name="Robben J."/>
            <person name="Grymonprez B."/>
            <person name="Weltjens I."/>
            <person name="Vanstreels E."/>
            <person name="Rieger M."/>
            <person name="Schaefer M."/>
            <person name="Mueller-Auer S."/>
            <person name="Gabel C."/>
            <person name="Fuchs M."/>
            <person name="Duesterhoeft A."/>
            <person name="Fritzc C."/>
            <person name="Holzer E."/>
            <person name="Moestl D."/>
            <person name="Hilbert H."/>
            <person name="Borzym K."/>
            <person name="Langer I."/>
            <person name="Beck A."/>
            <person name="Lehrach H."/>
            <person name="Reinhardt R."/>
            <person name="Pohl T.M."/>
            <person name="Eger P."/>
            <person name="Zimmermann W."/>
            <person name="Wedler H."/>
            <person name="Wambutt R."/>
            <person name="Purnelle B."/>
            <person name="Goffeau A."/>
            <person name="Cadieu E."/>
            <person name="Dreano S."/>
            <person name="Gloux S."/>
            <person name="Lelaure V."/>
            <person name="Mottier S."/>
            <person name="Galibert F."/>
            <person name="Aves S.J."/>
            <person name="Xiang Z."/>
            <person name="Hunt C."/>
            <person name="Moore K."/>
            <person name="Hurst S.M."/>
            <person name="Lucas M."/>
            <person name="Rochet M."/>
            <person name="Gaillardin C."/>
            <person name="Tallada V.A."/>
            <person name="Garzon A."/>
            <person name="Thode G."/>
            <person name="Daga R.R."/>
            <person name="Cruzado L."/>
            <person name="Jimenez J."/>
            <person name="Sanchez M."/>
            <person name="del Rey F."/>
            <person name="Benito J."/>
            <person name="Dominguez A."/>
            <person name="Revuelta J.L."/>
            <person name="Moreno S."/>
            <person name="Armstrong J."/>
            <person name="Forsburg S.L."/>
            <person name="Cerutti L."/>
            <person name="Lowe T."/>
            <person name="McCombie W.R."/>
            <person name="Paulsen I."/>
            <person name="Potashkin J."/>
            <person name="Shpakovski G.V."/>
            <person name="Ussery D."/>
            <person name="Barrell B.G."/>
            <person name="Nurse P."/>
        </authorList>
    </citation>
    <scope>NUCLEOTIDE SEQUENCE [LARGE SCALE GENOMIC DNA]</scope>
    <source>
        <strain>972 / ATCC 24843</strain>
    </source>
</reference>
<reference key="2">
    <citation type="journal article" date="2011" name="Science">
        <title>Comparative functional genomics of the fission yeasts.</title>
        <authorList>
            <person name="Rhind N."/>
            <person name="Chen Z."/>
            <person name="Yassour M."/>
            <person name="Thompson D.A."/>
            <person name="Haas B.J."/>
            <person name="Habib N."/>
            <person name="Wapinski I."/>
            <person name="Roy S."/>
            <person name="Lin M.F."/>
            <person name="Heiman D.I."/>
            <person name="Young S.K."/>
            <person name="Furuya K."/>
            <person name="Guo Y."/>
            <person name="Pidoux A."/>
            <person name="Chen H.M."/>
            <person name="Robbertse B."/>
            <person name="Goldberg J.M."/>
            <person name="Aoki K."/>
            <person name="Bayne E.H."/>
            <person name="Berlin A.M."/>
            <person name="Desjardins C.A."/>
            <person name="Dobbs E."/>
            <person name="Dukaj L."/>
            <person name="Fan L."/>
            <person name="FitzGerald M.G."/>
            <person name="French C."/>
            <person name="Gujja S."/>
            <person name="Hansen K."/>
            <person name="Keifenheim D."/>
            <person name="Levin J.Z."/>
            <person name="Mosher R.A."/>
            <person name="Mueller C.A."/>
            <person name="Pfiffner J."/>
            <person name="Priest M."/>
            <person name="Russ C."/>
            <person name="Smialowska A."/>
            <person name="Swoboda P."/>
            <person name="Sykes S.M."/>
            <person name="Vaughn M."/>
            <person name="Vengrova S."/>
            <person name="Yoder R."/>
            <person name="Zeng Q."/>
            <person name="Allshire R."/>
            <person name="Baulcombe D."/>
            <person name="Birren B.W."/>
            <person name="Brown W."/>
            <person name="Ekwall K."/>
            <person name="Kellis M."/>
            <person name="Leatherwood J."/>
            <person name="Levin H."/>
            <person name="Margalit H."/>
            <person name="Martienssen R."/>
            <person name="Nieduszynski C.A."/>
            <person name="Spatafora J.W."/>
            <person name="Friedman N."/>
            <person name="Dalgaard J.Z."/>
            <person name="Baumann P."/>
            <person name="Niki H."/>
            <person name="Regev A."/>
            <person name="Nusbaum C."/>
        </authorList>
    </citation>
    <scope>IDENTIFICATION</scope>
</reference>
<comment type="subcellular location">
    <subcellularLocation>
        <location evidence="1">Cytoplasm</location>
        <location evidence="1">Cytosol</location>
    </subcellularLocation>
    <subcellularLocation>
        <location evidence="1">Nucleus</location>
    </subcellularLocation>
</comment>
<evidence type="ECO:0000250" key="1"/>
<dbReference type="EMBL" id="CU329671">
    <property type="protein sequence ID" value="CAO77672.1"/>
    <property type="molecule type" value="Genomic_DNA"/>
</dbReference>
<dbReference type="RefSeq" id="XP_001713156.1">
    <property type="nucleotide sequence ID" value="XM_001713104.1"/>
</dbReference>
<dbReference type="RefSeq" id="XP_004001733.1">
    <property type="nucleotide sequence ID" value="XM_004001684.1"/>
</dbReference>
<dbReference type="STRING" id="284812.P0CS84"/>
<dbReference type="PaxDb" id="4896-SPBC1348.15.1"/>
<dbReference type="EnsemblFungi" id="SPBC1348.15.1">
    <property type="protein sequence ID" value="SPBC1348.15.1:pep"/>
    <property type="gene ID" value="SPBC1348.15"/>
</dbReference>
<dbReference type="EnsemblFungi" id="SPBCPT2R1.03.1">
    <property type="protein sequence ID" value="SPBCPT2R1.03.1:pep"/>
    <property type="gene ID" value="SPBCPT2R1.03"/>
</dbReference>
<dbReference type="PomBase" id="SPBC1348.15"/>
<dbReference type="VEuPathDB" id="FungiDB:SPBC1348.15"/>
<dbReference type="VEuPathDB" id="FungiDB:SPBCPT2R1.03"/>
<dbReference type="HOGENOM" id="CLU_1950070_0_0_1"/>
<dbReference type="InParanoid" id="P0CS84"/>
<dbReference type="PRO" id="PR:P0CS84"/>
<dbReference type="Proteomes" id="UP000002485">
    <property type="component" value="Chromosome II"/>
</dbReference>
<dbReference type="GO" id="GO:0005829">
    <property type="term" value="C:cytosol"/>
    <property type="evidence" value="ECO:0007669"/>
    <property type="project" value="UniProtKB-SubCell"/>
</dbReference>
<dbReference type="GO" id="GO:0005634">
    <property type="term" value="C:nucleus"/>
    <property type="evidence" value="ECO:0007669"/>
    <property type="project" value="UniProtKB-SubCell"/>
</dbReference>
<name>YI4F_SCHPO</name>
<keyword id="KW-0963">Cytoplasm</keyword>
<keyword id="KW-0539">Nucleus</keyword>
<keyword id="KW-1185">Reference proteome</keyword>